<protein>
    <recommendedName>
        <fullName>Phosphatidylserine synthase 1</fullName>
        <shortName>PSS-1</shortName>
        <shortName>PtdSer synthase 1</shortName>
        <ecNumber evidence="1">2.7.8.29</ecNumber>
    </recommendedName>
    <alternativeName>
        <fullName>Serine-exchange enzyme I</fullName>
    </alternativeName>
</protein>
<organism>
    <name type="scientific">Rattus norvegicus</name>
    <name type="common">Rat</name>
    <dbReference type="NCBI Taxonomy" id="10116"/>
    <lineage>
        <taxon>Eukaryota</taxon>
        <taxon>Metazoa</taxon>
        <taxon>Chordata</taxon>
        <taxon>Craniata</taxon>
        <taxon>Vertebrata</taxon>
        <taxon>Euteleostomi</taxon>
        <taxon>Mammalia</taxon>
        <taxon>Eutheria</taxon>
        <taxon>Euarchontoglires</taxon>
        <taxon>Glires</taxon>
        <taxon>Rodentia</taxon>
        <taxon>Myomorpha</taxon>
        <taxon>Muroidea</taxon>
        <taxon>Muridae</taxon>
        <taxon>Murinae</taxon>
        <taxon>Rattus</taxon>
    </lineage>
</organism>
<dbReference type="EC" id="2.7.8.29" evidence="1"/>
<dbReference type="EMBL" id="BC087129">
    <property type="protein sequence ID" value="AAH87129.1"/>
    <property type="molecule type" value="mRNA"/>
</dbReference>
<dbReference type="RefSeq" id="NP_001012113.1">
    <property type="nucleotide sequence ID" value="NM_001012113.1"/>
</dbReference>
<dbReference type="SMR" id="Q5PQL5"/>
<dbReference type="FunCoup" id="Q5PQL5">
    <property type="interactions" value="1900"/>
</dbReference>
<dbReference type="STRING" id="10116.ENSRNOP00000071072"/>
<dbReference type="PhosphoSitePlus" id="Q5PQL5"/>
<dbReference type="PaxDb" id="10116-ENSRNOP00000006317"/>
<dbReference type="Ensembl" id="ENSRNOT00000087143.2">
    <property type="protein sequence ID" value="ENSRNOP00000072374.2"/>
    <property type="gene ID" value="ENSRNOG00000052289.2"/>
</dbReference>
<dbReference type="GeneID" id="314553"/>
<dbReference type="KEGG" id="rno:314553"/>
<dbReference type="UCSC" id="RGD:1308949">
    <property type="organism name" value="rat"/>
</dbReference>
<dbReference type="AGR" id="RGD:1308949"/>
<dbReference type="CTD" id="9791"/>
<dbReference type="RGD" id="1308949">
    <property type="gene designation" value="Ptdss1"/>
</dbReference>
<dbReference type="eggNOG" id="KOG2735">
    <property type="taxonomic scope" value="Eukaryota"/>
</dbReference>
<dbReference type="GeneTree" id="ENSGT00530000063576"/>
<dbReference type="InParanoid" id="Q5PQL5"/>
<dbReference type="OrthoDB" id="43441at9989"/>
<dbReference type="PhylomeDB" id="Q5PQL5"/>
<dbReference type="Reactome" id="R-RNO-1483101">
    <property type="pathway name" value="Synthesis of PS"/>
</dbReference>
<dbReference type="UniPathway" id="UPA00948"/>
<dbReference type="PRO" id="PR:Q5PQL5"/>
<dbReference type="Proteomes" id="UP000002494">
    <property type="component" value="Chromosome 7"/>
</dbReference>
<dbReference type="GO" id="GO:0005789">
    <property type="term" value="C:endoplasmic reticulum membrane"/>
    <property type="evidence" value="ECO:0000266"/>
    <property type="project" value="RGD"/>
</dbReference>
<dbReference type="GO" id="GO:0106258">
    <property type="term" value="F:L-serine-phosphatidylcholine phosphatidyltransferase activity"/>
    <property type="evidence" value="ECO:0000266"/>
    <property type="project" value="RGD"/>
</dbReference>
<dbReference type="GO" id="GO:0106245">
    <property type="term" value="F:L-serine-phosphatidylethanolamine phosphatidyltransferase activity"/>
    <property type="evidence" value="ECO:0000266"/>
    <property type="project" value="RGD"/>
</dbReference>
<dbReference type="GO" id="GO:0006659">
    <property type="term" value="P:phosphatidylserine biosynthetic process"/>
    <property type="evidence" value="ECO:0000266"/>
    <property type="project" value="RGD"/>
</dbReference>
<dbReference type="InterPro" id="IPR004277">
    <property type="entry name" value="PSS"/>
</dbReference>
<dbReference type="PANTHER" id="PTHR15362">
    <property type="entry name" value="PHOSPHATIDYLINOSITOL SYNTHASE"/>
    <property type="match status" value="1"/>
</dbReference>
<dbReference type="PANTHER" id="PTHR15362:SF15">
    <property type="entry name" value="PHOSPHATIDYLSERINE SYNTHASE 1"/>
    <property type="match status" value="1"/>
</dbReference>
<dbReference type="Pfam" id="PF03034">
    <property type="entry name" value="PSS"/>
    <property type="match status" value="1"/>
</dbReference>
<sequence>MASCVGSRTLSKDDVNYRMHFRMINEQQVEDITIDFFYRPHTITLLSFTIISLMYFAFTRDDCVPEDNIWRGILSVIFFFLIISVLAFPNGPFTRPHPALWRMVFGLSVLYFLFLVFLLFLNFEQVKSLMYWLDPNLRYATREADIMEYAVNCHVITWERIVSHFDIFAFGHFWGWAMKALLIRSYGLCWTISITWELTELFFMHLLPNFAECWWDQVILDILLCNGGGIWLGMVVCRFLEMRTYHWASFKDIHTTTGKIKRAVLQFTPASWTYVRWFDPKSSFQRVAGIYLFMIIWQLTELNTFFLKHIFVFQASHPLSWCRILFIGCITAPTVRQYYAYLTDTQCKRVGTQCWVFGVIGFLEAIVCIKFGQDLFSKTQILYVVLWLLCVAFTTFLCLYGMVWYAEHYGHREKTYSECEDGTYSPEISWYHGKGSKGSEDSPPKHSNNNESHSSRRRNRHSKSKVTNGVGKK</sequence>
<proteinExistence type="evidence at transcript level"/>
<accession>Q5PQL5</accession>
<keyword id="KW-0007">Acetylation</keyword>
<keyword id="KW-0256">Endoplasmic reticulum</keyword>
<keyword id="KW-0444">Lipid biosynthesis</keyword>
<keyword id="KW-0443">Lipid metabolism</keyword>
<keyword id="KW-0472">Membrane</keyword>
<keyword id="KW-0594">Phospholipid biosynthesis</keyword>
<keyword id="KW-1208">Phospholipid metabolism</keyword>
<keyword id="KW-0597">Phosphoprotein</keyword>
<keyword id="KW-1185">Reference proteome</keyword>
<keyword id="KW-0808">Transferase</keyword>
<keyword id="KW-0812">Transmembrane</keyword>
<keyword id="KW-1133">Transmembrane helix</keyword>
<reference key="1">
    <citation type="journal article" date="2004" name="Genome Res.">
        <title>The status, quality, and expansion of the NIH full-length cDNA project: the Mammalian Gene Collection (MGC).</title>
        <authorList>
            <consortium name="The MGC Project Team"/>
        </authorList>
    </citation>
    <scope>NUCLEOTIDE SEQUENCE [LARGE SCALE MRNA]</scope>
    <source>
        <tissue>Testis</tissue>
    </source>
</reference>
<feature type="initiator methionine" description="Removed" evidence="1">
    <location>
        <position position="1"/>
    </location>
</feature>
<feature type="chain" id="PRO_0000416030" description="Phosphatidylserine synthase 1">
    <location>
        <begin position="2"/>
        <end position="473"/>
    </location>
</feature>
<feature type="topological domain" description="Cytoplasmic" evidence="3">
    <location>
        <begin position="2"/>
        <end position="35"/>
    </location>
</feature>
<feature type="transmembrane region" description="Helical" evidence="3">
    <location>
        <begin position="36"/>
        <end position="56"/>
    </location>
</feature>
<feature type="topological domain" description="Lumenal" evidence="3">
    <location>
        <begin position="57"/>
        <end position="72"/>
    </location>
</feature>
<feature type="transmembrane region" description="Helical" evidence="3">
    <location>
        <begin position="73"/>
        <end position="93"/>
    </location>
</feature>
<feature type="topological domain" description="Cytoplasmic" evidence="3">
    <location>
        <begin position="94"/>
        <end position="102"/>
    </location>
</feature>
<feature type="transmembrane region" description="Helical" evidence="3">
    <location>
        <begin position="103"/>
        <end position="123"/>
    </location>
</feature>
<feature type="topological domain" description="Lumenal" evidence="3">
    <location>
        <begin position="124"/>
        <end position="186"/>
    </location>
</feature>
<feature type="transmembrane region" description="Helical" evidence="3">
    <location>
        <begin position="187"/>
        <end position="207"/>
    </location>
</feature>
<feature type="topological domain" description="Cytoplasmic" evidence="3">
    <location>
        <begin position="208"/>
        <end position="216"/>
    </location>
</feature>
<feature type="transmembrane region" description="Helical" evidence="3">
    <location>
        <begin position="217"/>
        <end position="237"/>
    </location>
</feature>
<feature type="topological domain" description="Lumenal" evidence="3">
    <location>
        <begin position="238"/>
        <end position="286"/>
    </location>
</feature>
<feature type="transmembrane region" description="Helical" evidence="3">
    <location>
        <begin position="287"/>
        <end position="307"/>
    </location>
</feature>
<feature type="topological domain" description="Cytoplasmic" evidence="3">
    <location>
        <begin position="308"/>
        <end position="319"/>
    </location>
</feature>
<feature type="transmembrane region" description="Helical" evidence="3">
    <location>
        <begin position="320"/>
        <end position="342"/>
    </location>
</feature>
<feature type="topological domain" description="Lumenal" evidence="3">
    <location>
        <begin position="343"/>
        <end position="355"/>
    </location>
</feature>
<feature type="transmembrane region" description="Helical" evidence="3">
    <location>
        <begin position="356"/>
        <end position="376"/>
    </location>
</feature>
<feature type="topological domain" description="Cytoplasmic" evidence="3">
    <location>
        <begin position="377"/>
        <end position="383"/>
    </location>
</feature>
<feature type="transmembrane region" description="Helical" evidence="3">
    <location>
        <begin position="384"/>
        <end position="404"/>
    </location>
</feature>
<feature type="topological domain" description="Lumenal" evidence="3">
    <location>
        <begin position="405"/>
        <end position="473"/>
    </location>
</feature>
<feature type="region of interest" description="Disordered" evidence="4">
    <location>
        <begin position="430"/>
        <end position="473"/>
    </location>
</feature>
<feature type="compositionally biased region" description="Basic residues" evidence="4">
    <location>
        <begin position="455"/>
        <end position="464"/>
    </location>
</feature>
<feature type="modified residue" description="N-acetylalanine" evidence="1">
    <location>
        <position position="2"/>
    </location>
</feature>
<feature type="modified residue" description="Phosphoserine" evidence="1">
    <location>
        <position position="417"/>
    </location>
</feature>
<feature type="modified residue" description="Phosphoserine" evidence="1">
    <location>
        <position position="425"/>
    </location>
</feature>
<feature type="modified residue" description="Phosphoserine" evidence="1">
    <location>
        <position position="442"/>
    </location>
</feature>
<feature type="modified residue" description="Phosphoserine" evidence="1">
    <location>
        <position position="454"/>
    </location>
</feature>
<gene>
    <name type="primary">Ptdss1</name>
</gene>
<name>PTSS1_RAT</name>
<evidence type="ECO:0000250" key="1">
    <source>
        <dbReference type="UniProtKB" id="P48651"/>
    </source>
</evidence>
<evidence type="ECO:0000250" key="2">
    <source>
        <dbReference type="UniProtKB" id="Q99LH2"/>
    </source>
</evidence>
<evidence type="ECO:0000255" key="3"/>
<evidence type="ECO:0000256" key="4">
    <source>
        <dbReference type="SAM" id="MobiDB-lite"/>
    </source>
</evidence>
<evidence type="ECO:0000305" key="5"/>
<comment type="function">
    <text evidence="1">Catalyzes a base-exchange reaction in which the polar head group of phosphatidylethanolamine (PE) or phosphatidylcholine (PC) is replaced by L-serine (By similarity). Catalyzes mainly the conversion of phosphatidylcholine but also converts, in vitro and to a lesser extent, phosphatidylethanolamine (By similarity).</text>
</comment>
<comment type="catalytic activity">
    <reaction evidence="1">
        <text>a 1,2-diacyl-sn-glycero-3-phosphoethanolamine + L-serine = a 1,2-diacyl-sn-glycero-3-phospho-L-serine + ethanolamine</text>
        <dbReference type="Rhea" id="RHEA:27606"/>
        <dbReference type="ChEBI" id="CHEBI:33384"/>
        <dbReference type="ChEBI" id="CHEBI:57262"/>
        <dbReference type="ChEBI" id="CHEBI:57603"/>
        <dbReference type="ChEBI" id="CHEBI:64612"/>
        <dbReference type="EC" id="2.7.8.29"/>
    </reaction>
    <physiologicalReaction direction="left-to-right" evidence="1">
        <dbReference type="Rhea" id="RHEA:27607"/>
    </physiologicalReaction>
</comment>
<comment type="catalytic activity">
    <reaction evidence="1">
        <text>a 1,2-diacyl-sn-glycero-3-phosphocholine + L-serine = a 1,2-diacyl-sn-glycero-3-phospho-L-serine + choline</text>
        <dbReference type="Rhea" id="RHEA:45088"/>
        <dbReference type="ChEBI" id="CHEBI:15354"/>
        <dbReference type="ChEBI" id="CHEBI:33384"/>
        <dbReference type="ChEBI" id="CHEBI:57262"/>
        <dbReference type="ChEBI" id="CHEBI:57643"/>
    </reaction>
    <physiologicalReaction direction="left-to-right" evidence="1">
        <dbReference type="Rhea" id="RHEA:45089"/>
    </physiologicalReaction>
</comment>
<comment type="pathway">
    <text>Phospholipid metabolism; phosphatidylserine biosynthesis.</text>
</comment>
<comment type="subcellular location">
    <subcellularLocation>
        <location evidence="2">Endoplasmic reticulum membrane</location>
        <topology evidence="2">Multi-pass membrane protein</topology>
    </subcellularLocation>
    <text evidence="2">Highly enriched in the mitochondria-associated membrane (MAM).</text>
</comment>
<comment type="similarity">
    <text evidence="5">Belongs to the phosphatidyl serine synthase family.</text>
</comment>